<gene>
    <name type="primary">TTF1</name>
</gene>
<evidence type="ECO:0000250" key="1"/>
<evidence type="ECO:0000250" key="2">
    <source>
        <dbReference type="UniProtKB" id="Q62187"/>
    </source>
</evidence>
<evidence type="ECO:0000255" key="3">
    <source>
        <dbReference type="PROSITE-ProRule" id="PRU00133"/>
    </source>
</evidence>
<evidence type="ECO:0000256" key="4">
    <source>
        <dbReference type="SAM" id="MobiDB-lite"/>
    </source>
</evidence>
<evidence type="ECO:0000269" key="5">
    <source>
    </source>
</evidence>
<evidence type="ECO:0000269" key="6">
    <source>
    </source>
</evidence>
<evidence type="ECO:0000305" key="7"/>
<evidence type="ECO:0007744" key="8">
    <source>
    </source>
</evidence>
<evidence type="ECO:0007744" key="9">
    <source>
    </source>
</evidence>
<evidence type="ECO:0007744" key="10">
    <source>
    </source>
</evidence>
<evidence type="ECO:0007744" key="11">
    <source>
    </source>
</evidence>
<evidence type="ECO:0007744" key="12">
    <source>
    </source>
</evidence>
<evidence type="ECO:0007744" key="13">
    <source>
    </source>
</evidence>
<evidence type="ECO:0007744" key="14">
    <source>
    </source>
</evidence>
<evidence type="ECO:0007744" key="15">
    <source>
    </source>
</evidence>
<dbReference type="EMBL" id="X83973">
    <property type="protein sequence ID" value="CAA58807.1"/>
    <property type="status" value="ALT_SEQ"/>
    <property type="molecule type" value="mRNA"/>
</dbReference>
<dbReference type="EMBL" id="AL353701">
    <property type="status" value="NOT_ANNOTATED_CDS"/>
    <property type="molecule type" value="Genomic_DNA"/>
</dbReference>
<dbReference type="EMBL" id="BC050734">
    <property type="protein sequence ID" value="AAH50734.1"/>
    <property type="molecule type" value="mRNA"/>
</dbReference>
<dbReference type="EMBL" id="BC062692">
    <property type="protein sequence ID" value="AAH62692.1"/>
    <property type="status" value="ALT_SEQ"/>
    <property type="molecule type" value="mRNA"/>
</dbReference>
<dbReference type="EMBL" id="BC104639">
    <property type="protein sequence ID" value="AAI04640.1"/>
    <property type="status" value="ALT_SEQ"/>
    <property type="molecule type" value="mRNA"/>
</dbReference>
<dbReference type="EMBL" id="BC127669">
    <property type="protein sequence ID" value="AAI27670.1"/>
    <property type="status" value="ALT_SEQ"/>
    <property type="molecule type" value="mRNA"/>
</dbReference>
<dbReference type="EMBL" id="BC127670">
    <property type="protein sequence ID" value="AAI27671.1"/>
    <property type="status" value="ALT_SEQ"/>
    <property type="molecule type" value="mRNA"/>
</dbReference>
<dbReference type="EMBL" id="BC143048">
    <property type="protein sequence ID" value="AAI43049.1"/>
    <property type="status" value="ALT_SEQ"/>
    <property type="molecule type" value="mRNA"/>
</dbReference>
<dbReference type="EMBL" id="BC143049">
    <property type="protein sequence ID" value="AAI43050.1"/>
    <property type="status" value="ALT_SEQ"/>
    <property type="molecule type" value="mRNA"/>
</dbReference>
<dbReference type="CCDS" id="CCDS6948.1"/>
<dbReference type="PIR" id="I38182">
    <property type="entry name" value="I38182"/>
</dbReference>
<dbReference type="RefSeq" id="NP_001192225.1">
    <property type="nucleotide sequence ID" value="NM_001205296.1"/>
</dbReference>
<dbReference type="RefSeq" id="NP_031370.2">
    <property type="nucleotide sequence ID" value="NM_007344.3"/>
</dbReference>
<dbReference type="RefSeq" id="XP_006717336.2">
    <property type="nucleotide sequence ID" value="XM_006717273.3"/>
</dbReference>
<dbReference type="BioGRID" id="113121">
    <property type="interactions" value="123"/>
</dbReference>
<dbReference type="FunCoup" id="Q15361">
    <property type="interactions" value="2761"/>
</dbReference>
<dbReference type="IntAct" id="Q15361">
    <property type="interactions" value="86"/>
</dbReference>
<dbReference type="MINT" id="Q15361"/>
<dbReference type="STRING" id="9606.ENSP00000333920"/>
<dbReference type="GlyGen" id="Q15361">
    <property type="glycosylation" value="1 site, 1 N-linked glycan (1 site)"/>
</dbReference>
<dbReference type="iPTMnet" id="Q15361"/>
<dbReference type="PhosphoSitePlus" id="Q15361"/>
<dbReference type="BioMuta" id="TTF1"/>
<dbReference type="DMDM" id="158518534"/>
<dbReference type="jPOST" id="Q15361"/>
<dbReference type="MassIVE" id="Q15361"/>
<dbReference type="PaxDb" id="9606-ENSP00000333920"/>
<dbReference type="PeptideAtlas" id="Q15361"/>
<dbReference type="ProteomicsDB" id="60539"/>
<dbReference type="Pumba" id="Q15361"/>
<dbReference type="Antibodypedia" id="45229">
    <property type="antibodies" value="243 antibodies from 32 providers"/>
</dbReference>
<dbReference type="DNASU" id="7270"/>
<dbReference type="Ensembl" id="ENST00000334270.3">
    <property type="protein sequence ID" value="ENSP00000333920.2"/>
    <property type="gene ID" value="ENSG00000125482.13"/>
</dbReference>
<dbReference type="GeneID" id="7270"/>
<dbReference type="KEGG" id="hsa:7270"/>
<dbReference type="MANE-Select" id="ENST00000334270.3">
    <property type="protein sequence ID" value="ENSP00000333920.2"/>
    <property type="RefSeq nucleotide sequence ID" value="NM_007344.4"/>
    <property type="RefSeq protein sequence ID" value="NP_031370.2"/>
</dbReference>
<dbReference type="UCSC" id="uc004cbl.5">
    <property type="organism name" value="human"/>
</dbReference>
<dbReference type="AGR" id="HGNC:12397"/>
<dbReference type="CTD" id="7270"/>
<dbReference type="DisGeNET" id="7270"/>
<dbReference type="GeneCards" id="TTF1"/>
<dbReference type="HGNC" id="HGNC:12397">
    <property type="gene designation" value="TTF1"/>
</dbReference>
<dbReference type="HPA" id="ENSG00000125482">
    <property type="expression patterns" value="Low tissue specificity"/>
</dbReference>
<dbReference type="MalaCards" id="TTF1"/>
<dbReference type="MIM" id="600777">
    <property type="type" value="gene"/>
</dbReference>
<dbReference type="neXtProt" id="NX_Q15361"/>
<dbReference type="OpenTargets" id="ENSG00000125482"/>
<dbReference type="PharmGKB" id="PA37062"/>
<dbReference type="VEuPathDB" id="HostDB:ENSG00000125482"/>
<dbReference type="eggNOG" id="KOG0051">
    <property type="taxonomic scope" value="Eukaryota"/>
</dbReference>
<dbReference type="GeneTree" id="ENSGT00940000159729"/>
<dbReference type="HOGENOM" id="CLU_016962_1_0_1"/>
<dbReference type="InParanoid" id="Q15361"/>
<dbReference type="OMA" id="PKHFRKD"/>
<dbReference type="OrthoDB" id="5812619at2759"/>
<dbReference type="PAN-GO" id="Q15361">
    <property type="GO annotations" value="3 GO annotations based on evolutionary models"/>
</dbReference>
<dbReference type="PhylomeDB" id="Q15361"/>
<dbReference type="TreeFam" id="TF333537"/>
<dbReference type="PathwayCommons" id="Q15361"/>
<dbReference type="Reactome" id="R-HSA-427389">
    <property type="pathway name" value="ERCC6 (CSB) and EHMT2 (G9a) positively regulate rRNA expression"/>
</dbReference>
<dbReference type="Reactome" id="R-HSA-427413">
    <property type="pathway name" value="NoRC negatively regulates rRNA expression"/>
</dbReference>
<dbReference type="Reactome" id="R-HSA-5683826">
    <property type="pathway name" value="Surfactant metabolism"/>
</dbReference>
<dbReference type="Reactome" id="R-HSA-73762">
    <property type="pathway name" value="RNA Polymerase I Transcription Initiation"/>
</dbReference>
<dbReference type="Reactome" id="R-HSA-73863">
    <property type="pathway name" value="RNA Polymerase I Transcription Termination"/>
</dbReference>
<dbReference type="SignaLink" id="Q15361"/>
<dbReference type="SIGNOR" id="Q15361"/>
<dbReference type="BioGRID-ORCS" id="7270">
    <property type="hits" value="280 hits in 1177 CRISPR screens"/>
</dbReference>
<dbReference type="ChiTaRS" id="TTF1">
    <property type="organism name" value="human"/>
</dbReference>
<dbReference type="GeneWiki" id="Transcription_termination_factor,_RNA_polymerase_I"/>
<dbReference type="GenomeRNAi" id="7270"/>
<dbReference type="Pharos" id="Q15361">
    <property type="development level" value="Tbio"/>
</dbReference>
<dbReference type="PRO" id="PR:Q15361"/>
<dbReference type="Proteomes" id="UP000005640">
    <property type="component" value="Chromosome 9"/>
</dbReference>
<dbReference type="RNAct" id="Q15361">
    <property type="molecule type" value="protein"/>
</dbReference>
<dbReference type="Bgee" id="ENSG00000125482">
    <property type="expression patterns" value="Expressed in buccal mucosa cell and 212 other cell types or tissues"/>
</dbReference>
<dbReference type="ExpressionAtlas" id="Q15361">
    <property type="expression patterns" value="baseline and differential"/>
</dbReference>
<dbReference type="GO" id="GO:0001650">
    <property type="term" value="C:fibrillar center"/>
    <property type="evidence" value="ECO:0000314"/>
    <property type="project" value="HPA"/>
</dbReference>
<dbReference type="GO" id="GO:0005730">
    <property type="term" value="C:nucleolus"/>
    <property type="evidence" value="ECO:0000318"/>
    <property type="project" value="GO_Central"/>
</dbReference>
<dbReference type="GO" id="GO:0005654">
    <property type="term" value="C:nucleoplasm"/>
    <property type="evidence" value="ECO:0000304"/>
    <property type="project" value="Reactome"/>
</dbReference>
<dbReference type="GO" id="GO:0005634">
    <property type="term" value="C:nucleus"/>
    <property type="evidence" value="ECO:0000303"/>
    <property type="project" value="UniProtKB"/>
</dbReference>
<dbReference type="GO" id="GO:0003682">
    <property type="term" value="F:chromatin binding"/>
    <property type="evidence" value="ECO:0000318"/>
    <property type="project" value="GO_Central"/>
</dbReference>
<dbReference type="GO" id="GO:0003677">
    <property type="term" value="F:DNA binding"/>
    <property type="evidence" value="ECO:0007669"/>
    <property type="project" value="UniProtKB-KW"/>
</dbReference>
<dbReference type="GO" id="GO:0006338">
    <property type="term" value="P:chromatin remodeling"/>
    <property type="evidence" value="ECO:0007669"/>
    <property type="project" value="Ensembl"/>
</dbReference>
<dbReference type="GO" id="GO:0006353">
    <property type="term" value="P:DNA-templated transcription termination"/>
    <property type="evidence" value="ECO:0000303"/>
    <property type="project" value="UniProtKB"/>
</dbReference>
<dbReference type="GO" id="GO:0008156">
    <property type="term" value="P:negative regulation of DNA replication"/>
    <property type="evidence" value="ECO:0007669"/>
    <property type="project" value="UniProtKB-KW"/>
</dbReference>
<dbReference type="GO" id="GO:0006363">
    <property type="term" value="P:termination of RNA polymerase I transcription"/>
    <property type="evidence" value="ECO:0000250"/>
    <property type="project" value="UniProtKB"/>
</dbReference>
<dbReference type="GO" id="GO:0006361">
    <property type="term" value="P:transcription initiation at RNA polymerase I promoter"/>
    <property type="evidence" value="ECO:0007669"/>
    <property type="project" value="Ensembl"/>
</dbReference>
<dbReference type="Gene3D" id="1.10.10.60">
    <property type="entry name" value="Homeodomain-like"/>
    <property type="match status" value="1"/>
</dbReference>
<dbReference type="InterPro" id="IPR001005">
    <property type="entry name" value="SANT/Myb"/>
</dbReference>
<dbReference type="InterPro" id="IPR053078">
    <property type="entry name" value="TTF1-like"/>
</dbReference>
<dbReference type="PANTHER" id="PTHR46760">
    <property type="entry name" value="TRANSCRIPTION TERMINATION FACTOR 1"/>
    <property type="match status" value="1"/>
</dbReference>
<dbReference type="PANTHER" id="PTHR46760:SF1">
    <property type="entry name" value="TRANSCRIPTION TERMINATION FACTOR 1"/>
    <property type="match status" value="1"/>
</dbReference>
<dbReference type="Pfam" id="PF13921">
    <property type="entry name" value="Myb_DNA-bind_6"/>
    <property type="match status" value="1"/>
</dbReference>
<dbReference type="SMART" id="SM00717">
    <property type="entry name" value="SANT"/>
    <property type="match status" value="2"/>
</dbReference>
<dbReference type="PROSITE" id="PS50090">
    <property type="entry name" value="MYB_LIKE"/>
    <property type="match status" value="2"/>
</dbReference>
<name>TTF1_HUMAN</name>
<sequence>MEGESSRFEIHTPVSDKKKKKCSIHKERPQKHSHEIFRDSSLVNEQSQITRRKKRKKDFQHLISSPLKKSRICDETANATSTLKKRKKRRYSALEVDEEAGVTVVLVDKENINNTPKHFRKDVDVVCVDMSIEQKLPRKPKTDKFQVLAKSHAHKSEALHSKVREKKNKKHQRKAASWESQRARDTLPQSESHQEESWLSVGPGGEITELPASAHKNKSKKKKKKSSNREYETLAMPEGSQAGREAGTDMQESQPTVGLDDETPQLLGPTHKKKSKKKKKKKSNHQEFEALAMPEGSQVGSEVGADMQESRPAVGLHGETAGIPAPAYKNKSKKKKKKSNHQEFEAVAMPESLESAYPEGSQVGSEVGTVEGSTALKGFKESNSTKKKSKKRKLTSVKRARVSGDDFSVPSKNSESTLFDSVEGDGAMMEEGVKSRPRQKKTQACLASKHVQEAPRLEPANEEHNVETAEDSEIRYLSADSGDADDSDADLGSAVKQLQEFIPNIKDRATSTIKRMYRDDLERFKEFKAQGVAIKFGKFSVKENKQLEKNVEDFLALTGIESADKLLYTDRYPEEKSVITNLKRRYSFRLHIGRNIARPWKLIYYRAKKMFDVNNYKGRYSEGDTEKLKMYHSLLGNDWKTIGEMVARSSLSVALKFSQISSQRNRGAWSKSETRKLIKAVEEVILKKMSPQELKEVDSKLQENPESCLSIVREKLYKGISWVEVEAKVQTRNWMQCKSKWTEILTKRMTNGRRIYYGMNALRAKVSLIERLYEINVEDTNEIDWEDLASAIGDVPPSYVQTKFSRLKAVYVPFWQKKTFPEIIDYLYETTLPLLKEKLEKMMEKKGTKIQTPAAPKQVFPFRDIFYYEDDSEGEDIEKESEGQAPCMAHACNSSTLGGQGRWII</sequence>
<protein>
    <recommendedName>
        <fullName>Transcription termination factor 1</fullName>
        <shortName>TTF-1</shortName>
    </recommendedName>
    <alternativeName>
        <fullName>RNA polymerase I termination factor</fullName>
    </alternativeName>
    <alternativeName>
        <fullName>Transcription termination factor I</fullName>
        <shortName>TTF-I</shortName>
    </alternativeName>
</protein>
<proteinExistence type="evidence at protein level"/>
<keyword id="KW-0236">DNA replication inhibitor</keyword>
<keyword id="KW-0238">DNA-binding</keyword>
<keyword id="KW-1017">Isopeptide bond</keyword>
<keyword id="KW-0539">Nucleus</keyword>
<keyword id="KW-0597">Phosphoprotein</keyword>
<keyword id="KW-1267">Proteomics identification</keyword>
<keyword id="KW-1185">Reference proteome</keyword>
<keyword id="KW-0677">Repeat</keyword>
<keyword id="KW-0804">Transcription</keyword>
<keyword id="KW-0805">Transcription regulation</keyword>
<keyword id="KW-0806">Transcription termination</keyword>
<keyword id="KW-0832">Ubl conjugation</keyword>
<organism>
    <name type="scientific">Homo sapiens</name>
    <name type="common">Human</name>
    <dbReference type="NCBI Taxonomy" id="9606"/>
    <lineage>
        <taxon>Eukaryota</taxon>
        <taxon>Metazoa</taxon>
        <taxon>Chordata</taxon>
        <taxon>Craniata</taxon>
        <taxon>Vertebrata</taxon>
        <taxon>Euteleostomi</taxon>
        <taxon>Mammalia</taxon>
        <taxon>Eutheria</taxon>
        <taxon>Euarchontoglires</taxon>
        <taxon>Primates</taxon>
        <taxon>Haplorrhini</taxon>
        <taxon>Catarrhini</taxon>
        <taxon>Hominidae</taxon>
        <taxon>Homo</taxon>
    </lineage>
</organism>
<accession>Q15361</accession>
<accession>A1L160</accession>
<accession>Q4VXF3</accession>
<accession>Q58EY2</accession>
<accession>Q6P5T5</accession>
<reference key="1">
    <citation type="journal article" date="1995" name="Proc. Natl. Acad. Sci. U.S.A.">
        <title>Molecular evolution of mammalian ribosomal gene terminator sequences and the transcription termination factor TTF-1.</title>
        <authorList>
            <person name="Evers R."/>
            <person name="Grummt I."/>
        </authorList>
    </citation>
    <scope>NUCLEOTIDE SEQUENCE [MRNA]</scope>
    <scope>FUNCTION</scope>
</reference>
<reference key="2">
    <citation type="journal article" date="2004" name="Nature">
        <title>DNA sequence and analysis of human chromosome 9.</title>
        <authorList>
            <person name="Humphray S.J."/>
            <person name="Oliver K."/>
            <person name="Hunt A.R."/>
            <person name="Plumb R.W."/>
            <person name="Loveland J.E."/>
            <person name="Howe K.L."/>
            <person name="Andrews T.D."/>
            <person name="Searle S."/>
            <person name="Hunt S.E."/>
            <person name="Scott C.E."/>
            <person name="Jones M.C."/>
            <person name="Ainscough R."/>
            <person name="Almeida J.P."/>
            <person name="Ambrose K.D."/>
            <person name="Ashwell R.I.S."/>
            <person name="Babbage A.K."/>
            <person name="Babbage S."/>
            <person name="Bagguley C.L."/>
            <person name="Bailey J."/>
            <person name="Banerjee R."/>
            <person name="Barker D.J."/>
            <person name="Barlow K.F."/>
            <person name="Bates K."/>
            <person name="Beasley H."/>
            <person name="Beasley O."/>
            <person name="Bird C.P."/>
            <person name="Bray-Allen S."/>
            <person name="Brown A.J."/>
            <person name="Brown J.Y."/>
            <person name="Burford D."/>
            <person name="Burrill W."/>
            <person name="Burton J."/>
            <person name="Carder C."/>
            <person name="Carter N.P."/>
            <person name="Chapman J.C."/>
            <person name="Chen Y."/>
            <person name="Clarke G."/>
            <person name="Clark S.Y."/>
            <person name="Clee C.M."/>
            <person name="Clegg S."/>
            <person name="Collier R.E."/>
            <person name="Corby N."/>
            <person name="Crosier M."/>
            <person name="Cummings A.T."/>
            <person name="Davies J."/>
            <person name="Dhami P."/>
            <person name="Dunn M."/>
            <person name="Dutta I."/>
            <person name="Dyer L.W."/>
            <person name="Earthrowl M.E."/>
            <person name="Faulkner L."/>
            <person name="Fleming C.J."/>
            <person name="Frankish A."/>
            <person name="Frankland J.A."/>
            <person name="French L."/>
            <person name="Fricker D.G."/>
            <person name="Garner P."/>
            <person name="Garnett J."/>
            <person name="Ghori J."/>
            <person name="Gilbert J.G.R."/>
            <person name="Glison C."/>
            <person name="Grafham D.V."/>
            <person name="Gribble S."/>
            <person name="Griffiths C."/>
            <person name="Griffiths-Jones S."/>
            <person name="Grocock R."/>
            <person name="Guy J."/>
            <person name="Hall R.E."/>
            <person name="Hammond S."/>
            <person name="Harley J.L."/>
            <person name="Harrison E.S.I."/>
            <person name="Hart E.A."/>
            <person name="Heath P.D."/>
            <person name="Henderson C.D."/>
            <person name="Hopkins B.L."/>
            <person name="Howard P.J."/>
            <person name="Howden P.J."/>
            <person name="Huckle E."/>
            <person name="Johnson C."/>
            <person name="Johnson D."/>
            <person name="Joy A.A."/>
            <person name="Kay M."/>
            <person name="Keenan S."/>
            <person name="Kershaw J.K."/>
            <person name="Kimberley A.M."/>
            <person name="King A."/>
            <person name="Knights A."/>
            <person name="Laird G.K."/>
            <person name="Langford C."/>
            <person name="Lawlor S."/>
            <person name="Leongamornlert D.A."/>
            <person name="Leversha M."/>
            <person name="Lloyd C."/>
            <person name="Lloyd D.M."/>
            <person name="Lovell J."/>
            <person name="Martin S."/>
            <person name="Mashreghi-Mohammadi M."/>
            <person name="Matthews L."/>
            <person name="McLaren S."/>
            <person name="McLay K.E."/>
            <person name="McMurray A."/>
            <person name="Milne S."/>
            <person name="Nickerson T."/>
            <person name="Nisbett J."/>
            <person name="Nordsiek G."/>
            <person name="Pearce A.V."/>
            <person name="Peck A.I."/>
            <person name="Porter K.M."/>
            <person name="Pandian R."/>
            <person name="Pelan S."/>
            <person name="Phillimore B."/>
            <person name="Povey S."/>
            <person name="Ramsey Y."/>
            <person name="Rand V."/>
            <person name="Scharfe M."/>
            <person name="Sehra H.K."/>
            <person name="Shownkeen R."/>
            <person name="Sims S.K."/>
            <person name="Skuce C.D."/>
            <person name="Smith M."/>
            <person name="Steward C.A."/>
            <person name="Swarbreck D."/>
            <person name="Sycamore N."/>
            <person name="Tester J."/>
            <person name="Thorpe A."/>
            <person name="Tracey A."/>
            <person name="Tromans A."/>
            <person name="Thomas D.W."/>
            <person name="Wall M."/>
            <person name="Wallis J.M."/>
            <person name="West A.P."/>
            <person name="Whitehead S.L."/>
            <person name="Willey D.L."/>
            <person name="Williams S.A."/>
            <person name="Wilming L."/>
            <person name="Wray P.W."/>
            <person name="Young L."/>
            <person name="Ashurst J.L."/>
            <person name="Coulson A."/>
            <person name="Blocker H."/>
            <person name="Durbin R.M."/>
            <person name="Sulston J.E."/>
            <person name="Hubbard T."/>
            <person name="Jackson M.J."/>
            <person name="Bentley D.R."/>
            <person name="Beck S."/>
            <person name="Rogers J."/>
            <person name="Dunham I."/>
        </authorList>
    </citation>
    <scope>NUCLEOTIDE SEQUENCE [LARGE SCALE GENOMIC DNA]</scope>
</reference>
<reference key="3">
    <citation type="journal article" date="2004" name="Genome Res.">
        <title>The status, quality, and expansion of the NIH full-length cDNA project: the Mammalian Gene Collection (MGC).</title>
        <authorList>
            <consortium name="The MGC Project Team"/>
        </authorList>
    </citation>
    <scope>NUCLEOTIDE SEQUENCE [LARGE SCALE MRNA] OF 1-338 AND 457-905</scope>
    <scope>VARIANT LYS-35</scope>
    <source>
        <tissue>Uterus</tissue>
    </source>
</reference>
<reference key="4">
    <citation type="journal article" date="2006" name="Cell">
        <title>Global, in vivo, and site-specific phosphorylation dynamics in signaling networks.</title>
        <authorList>
            <person name="Olsen J.V."/>
            <person name="Blagoev B."/>
            <person name="Gnad F."/>
            <person name="Macek B."/>
            <person name="Kumar C."/>
            <person name="Mortensen P."/>
            <person name="Mann M."/>
        </authorList>
    </citation>
    <scope>IDENTIFICATION BY MASS SPECTROMETRY [LARGE SCALE ANALYSIS]</scope>
    <source>
        <tissue>Cervix carcinoma</tissue>
    </source>
</reference>
<reference key="5">
    <citation type="journal article" date="2007" name="Science">
        <title>ATM and ATR substrate analysis reveals extensive protein networks responsive to DNA damage.</title>
        <authorList>
            <person name="Matsuoka S."/>
            <person name="Ballif B.A."/>
            <person name="Smogorzewska A."/>
            <person name="McDonald E.R. III"/>
            <person name="Hurov K.E."/>
            <person name="Luo J."/>
            <person name="Bakalarski C.E."/>
            <person name="Zhao Z."/>
            <person name="Solimini N."/>
            <person name="Lerenthal Y."/>
            <person name="Shiloh Y."/>
            <person name="Gygi S.P."/>
            <person name="Elledge S.J."/>
        </authorList>
    </citation>
    <scope>PHOSPHORYLATION [LARGE SCALE ANALYSIS] AT SER-240</scope>
    <scope>IDENTIFICATION BY MASS SPECTROMETRY [LARGE SCALE ANALYSIS]</scope>
    <source>
        <tissue>Embryonic kidney</tissue>
    </source>
</reference>
<reference key="6">
    <citation type="journal article" date="2008" name="Proc. Natl. Acad. Sci. U.S.A.">
        <title>A quantitative atlas of mitotic phosphorylation.</title>
        <authorList>
            <person name="Dephoure N."/>
            <person name="Zhou C."/>
            <person name="Villen J."/>
            <person name="Beausoleil S.A."/>
            <person name="Bakalarski C.E."/>
            <person name="Elledge S.J."/>
            <person name="Gygi S.P."/>
        </authorList>
    </citation>
    <scope>PHOSPHORYLATION [LARGE SCALE ANALYSIS] AT SER-65; SER-403; SER-481 AND SER-487</scope>
    <scope>IDENTIFICATION BY MASS SPECTROMETRY [LARGE SCALE ANALYSIS]</scope>
    <source>
        <tissue>Cervix carcinoma</tissue>
    </source>
</reference>
<reference key="7">
    <citation type="journal article" date="2009" name="Anal. Chem.">
        <title>Lys-N and trypsin cover complementary parts of the phosphoproteome in a refined SCX-based approach.</title>
        <authorList>
            <person name="Gauci S."/>
            <person name="Helbig A.O."/>
            <person name="Slijper M."/>
            <person name="Krijgsveld J."/>
            <person name="Heck A.J."/>
            <person name="Mohammed S."/>
        </authorList>
    </citation>
    <scope>IDENTIFICATION BY MASS SPECTROMETRY [LARGE SCALE ANALYSIS]</scope>
</reference>
<reference key="8">
    <citation type="journal article" date="2009" name="Sci. Signal.">
        <title>Quantitative phosphoproteomic analysis of T cell receptor signaling reveals system-wide modulation of protein-protein interactions.</title>
        <authorList>
            <person name="Mayya V."/>
            <person name="Lundgren D.H."/>
            <person name="Hwang S.-I."/>
            <person name="Rezaul K."/>
            <person name="Wu L."/>
            <person name="Eng J.K."/>
            <person name="Rodionov V."/>
            <person name="Han D.K."/>
        </authorList>
    </citation>
    <scope>PHOSPHORYLATION [LARGE SCALE ANALYSIS] AT TYR-476; SER-481 AND SER-487</scope>
    <scope>IDENTIFICATION BY MASS SPECTROMETRY [LARGE SCALE ANALYSIS]</scope>
    <source>
        <tissue>Leukemic T-cell</tissue>
    </source>
</reference>
<reference key="9">
    <citation type="journal article" date="2010" name="Sci. Signal.">
        <title>Quantitative phosphoproteomics reveals widespread full phosphorylation site occupancy during mitosis.</title>
        <authorList>
            <person name="Olsen J.V."/>
            <person name="Vermeulen M."/>
            <person name="Santamaria A."/>
            <person name="Kumar C."/>
            <person name="Miller M.L."/>
            <person name="Jensen L.J."/>
            <person name="Gnad F."/>
            <person name="Cox J."/>
            <person name="Jensen T.S."/>
            <person name="Nigg E.A."/>
            <person name="Brunak S."/>
            <person name="Mann M."/>
        </authorList>
    </citation>
    <scope>PHOSPHORYLATION [LARGE SCALE ANALYSIS] AT SER-65; SER-487 AND SER-872</scope>
    <scope>IDENTIFICATION BY MASS SPECTROMETRY [LARGE SCALE ANALYSIS]</scope>
    <source>
        <tissue>Cervix carcinoma</tissue>
    </source>
</reference>
<reference key="10">
    <citation type="journal article" date="2011" name="Sci. Signal.">
        <title>System-wide temporal characterization of the proteome and phosphoproteome of human embryonic stem cell differentiation.</title>
        <authorList>
            <person name="Rigbolt K.T."/>
            <person name="Prokhorova T.A."/>
            <person name="Akimov V."/>
            <person name="Henningsen J."/>
            <person name="Johansen P.T."/>
            <person name="Kratchmarova I."/>
            <person name="Kassem M."/>
            <person name="Mann M."/>
            <person name="Olsen J.V."/>
            <person name="Blagoev B."/>
        </authorList>
    </citation>
    <scope>PHOSPHORYLATION [LARGE SCALE ANALYSIS] AT SER-478; SER-481; SER-487 AND SER-872</scope>
    <scope>IDENTIFICATION BY MASS SPECTROMETRY [LARGE SCALE ANALYSIS]</scope>
</reference>
<reference key="11">
    <citation type="journal article" date="2013" name="J. Proteome Res.">
        <title>Toward a comprehensive characterization of a human cancer cell phosphoproteome.</title>
        <authorList>
            <person name="Zhou H."/>
            <person name="Di Palma S."/>
            <person name="Preisinger C."/>
            <person name="Peng M."/>
            <person name="Polat A.N."/>
            <person name="Heck A.J."/>
            <person name="Mohammed S."/>
        </authorList>
    </citation>
    <scope>PHOSPHORYLATION [LARGE SCALE ANALYSIS] AT SER-65; THR-248; SER-403; SER-487 AND SER-872</scope>
    <scope>IDENTIFICATION BY MASS SPECTROMETRY [LARGE SCALE ANALYSIS]</scope>
    <source>
        <tissue>Cervix carcinoma</tissue>
        <tissue>Erythroleukemia</tissue>
    </source>
</reference>
<reference key="12">
    <citation type="journal article" date="2014" name="J. Proteomics">
        <title>An enzyme assisted RP-RPLC approach for in-depth analysis of human liver phosphoproteome.</title>
        <authorList>
            <person name="Bian Y."/>
            <person name="Song C."/>
            <person name="Cheng K."/>
            <person name="Dong M."/>
            <person name="Wang F."/>
            <person name="Huang J."/>
            <person name="Sun D."/>
            <person name="Wang L."/>
            <person name="Ye M."/>
            <person name="Zou H."/>
        </authorList>
    </citation>
    <scope>PHOSPHORYLATION [LARGE SCALE ANALYSIS] AT SER-487 AND SER-872</scope>
    <scope>IDENTIFICATION BY MASS SPECTROMETRY [LARGE SCALE ANALYSIS]</scope>
    <source>
        <tissue>Liver</tissue>
    </source>
</reference>
<reference key="13">
    <citation type="journal article" date="2017" name="Nat. Struct. Mol. Biol.">
        <title>Site-specific mapping of the human SUMO proteome reveals co-modification with phosphorylation.</title>
        <authorList>
            <person name="Hendriks I.A."/>
            <person name="Lyon D."/>
            <person name="Young C."/>
            <person name="Jensen L.J."/>
            <person name="Vertegaal A.C."/>
            <person name="Nielsen M.L."/>
        </authorList>
    </citation>
    <scope>SUMOYLATION [LARGE SCALE ANALYSIS] AT LYS-700</scope>
    <scope>IDENTIFICATION BY MASS SPECTROMETRY [LARGE SCALE ANALYSIS]</scope>
</reference>
<comment type="function">
    <text evidence="2 6">Multifunctional nucleolar protein that terminates ribosomal gene transcription, mediates replication fork arrest and regulates RNA polymerase I transcription on chromatin. Plays a dual role in rDNA regulation, being involved in both activation and silencing of rDNA transcription. Interaction with BAZ2A/TIP5 recovers DNA-binding activity.</text>
</comment>
<comment type="subunit">
    <text evidence="2">Oligomer. The oligomeric structure enables to interact simultaneously with two separate DNA fragments. Interacts with BAZ2A/TIP5. Interacts with CAVIN1. Interacts (via the N-terminal region (NRD) and a C-terminal region) with CDKN2A/ARF; the interaction is direct. Interacts (via C-terminal region) with NPM1/B23.</text>
</comment>
<comment type="subcellular location">
    <subcellularLocation>
        <location evidence="2">Nucleus</location>
    </subcellularLocation>
    <subcellularLocation>
        <location evidence="2">Nucleus</location>
        <location evidence="2">Nucleolus</location>
    </subcellularLocation>
    <subcellularLocation>
        <location evidence="2">Nucleus</location>
        <location evidence="2">Nucleoplasm</location>
    </subcellularLocation>
    <text evidence="2">May be localized to the nucleolus in an NPM1/B23-dependent manner. May be displaced from the nucleolus into the nucleoplasm in an CDKN2A/ARF-dependent manner. May shuttle back and forth from nucleoplasm to nucleolus.</text>
</comment>
<comment type="domain">
    <text evidence="1">The N-terminal region (NRD) inhibits DNA-binding via its interaction with the C-terminal region.</text>
</comment>
<comment type="sequence caution" evidence="7">
    <conflict type="miscellaneous discrepancy">
        <sequence resource="EMBL-CDS" id="AAH62692"/>
    </conflict>
    <text>Contaminating sequence. Potential poly-A sequence.</text>
</comment>
<comment type="sequence caution" evidence="7">
    <conflict type="miscellaneous discrepancy">
        <sequence resource="EMBL-CDS" id="AAI04640"/>
    </conflict>
    <text>Contaminating sequence. Potential poly-A sequence.</text>
</comment>
<comment type="sequence caution" evidence="7">
    <conflict type="miscellaneous discrepancy">
        <sequence resource="EMBL-CDS" id="AAI27670"/>
    </conflict>
    <text>Contaminating sequence. Sequence of unknown origin in the N-terminal part.</text>
</comment>
<comment type="sequence caution" evidence="7">
    <conflict type="miscellaneous discrepancy">
        <sequence resource="EMBL-CDS" id="AAI27671"/>
    </conflict>
    <text>Contaminating sequence. Sequence of unknown origin in the N-terminal part.</text>
</comment>
<comment type="sequence caution" evidence="7">
    <conflict type="miscellaneous discrepancy">
        <sequence resource="EMBL-CDS" id="AAI43049"/>
    </conflict>
    <text>Contaminating sequence. Sequence of unknown origin in the N-terminal part.</text>
</comment>
<comment type="sequence caution" evidence="7">
    <conflict type="miscellaneous discrepancy">
        <sequence resource="EMBL-CDS" id="AAI43050"/>
    </conflict>
    <text>Contaminating sequence. Sequence of unknown origin in the N-terminal part.</text>
</comment>
<comment type="sequence caution" evidence="7">
    <conflict type="frameshift">
        <sequence resource="EMBL-CDS" id="CAA58807"/>
    </conflict>
</comment>
<comment type="sequence caution" evidence="7">
    <conflict type="miscellaneous discrepancy">
        <sequence resource="EMBL-CDS" id="CAA58807"/>
    </conflict>
    <text>Contaminating sequence. Sequence of unknown origin in the C-terminal part.</text>
</comment>
<feature type="chain" id="PRO_0000250472" description="Transcription termination factor 1">
    <location>
        <begin position="1"/>
        <end position="905"/>
    </location>
</feature>
<feature type="domain" description="Myb-like 1" evidence="3">
    <location>
        <begin position="612"/>
        <end position="661"/>
    </location>
</feature>
<feature type="domain" description="Myb-like 2" evidence="3">
    <location>
        <begin position="661"/>
        <end position="745"/>
    </location>
</feature>
<feature type="region of interest" description="N-terminal region (NRD)" evidence="1">
    <location>
        <begin position="1"/>
        <end position="223"/>
    </location>
</feature>
<feature type="region of interest" description="Disordered" evidence="4">
    <location>
        <begin position="1"/>
        <end position="33"/>
    </location>
</feature>
<feature type="region of interest" description="Disordered" evidence="4">
    <location>
        <begin position="151"/>
        <end position="443"/>
    </location>
</feature>
<feature type="region of interest" description="May be involved in interaction with ARF" evidence="2">
    <location>
        <begin position="498"/>
        <end position="886"/>
    </location>
</feature>
<feature type="compositionally biased region" description="Basic and acidic residues" evidence="4">
    <location>
        <begin position="1"/>
        <end position="16"/>
    </location>
</feature>
<feature type="compositionally biased region" description="Basic and acidic residues" evidence="4">
    <location>
        <begin position="24"/>
        <end position="33"/>
    </location>
</feature>
<feature type="compositionally biased region" description="Basic residues" evidence="4">
    <location>
        <begin position="163"/>
        <end position="174"/>
    </location>
</feature>
<feature type="compositionally biased region" description="Basic residues" evidence="4">
    <location>
        <begin position="215"/>
        <end position="226"/>
    </location>
</feature>
<feature type="compositionally biased region" description="Basic residues" evidence="4">
    <location>
        <begin position="270"/>
        <end position="283"/>
    </location>
</feature>
<feature type="compositionally biased region" description="Basic residues" evidence="4">
    <location>
        <begin position="330"/>
        <end position="339"/>
    </location>
</feature>
<feature type="compositionally biased region" description="Basic residues" evidence="4">
    <location>
        <begin position="385"/>
        <end position="401"/>
    </location>
</feature>
<feature type="compositionally biased region" description="Polar residues" evidence="4">
    <location>
        <begin position="410"/>
        <end position="419"/>
    </location>
</feature>
<feature type="modified residue" description="Phosphoserine" evidence="9 11 13">
    <location>
        <position position="65"/>
    </location>
</feature>
<feature type="modified residue" description="Phosphoserine" evidence="8">
    <location>
        <position position="240"/>
    </location>
</feature>
<feature type="modified residue" description="Phosphothreonine" evidence="13">
    <location>
        <position position="248"/>
    </location>
</feature>
<feature type="modified residue" description="Phosphoserine" evidence="9 13">
    <location>
        <position position="403"/>
    </location>
</feature>
<feature type="modified residue" description="Phosphotyrosine" evidence="10">
    <location>
        <position position="476"/>
    </location>
</feature>
<feature type="modified residue" description="Phosphoserine" evidence="12">
    <location>
        <position position="478"/>
    </location>
</feature>
<feature type="modified residue" description="Phosphoserine" evidence="9 10 12">
    <location>
        <position position="481"/>
    </location>
</feature>
<feature type="modified residue" description="Phosphoserine" evidence="9 10 11 12 13 14">
    <location>
        <position position="487"/>
    </location>
</feature>
<feature type="modified residue" description="Phosphoserine" evidence="11 12 13 14">
    <location>
        <position position="872"/>
    </location>
</feature>
<feature type="cross-link" description="Glycyl lysine isopeptide (Lys-Gly) (interchain with G-Cter in SUMO2)" evidence="15">
    <location>
        <position position="700"/>
    </location>
</feature>
<feature type="sequence variant" id="VAR_027563" description="In dbSNP:rs11550314." evidence="5">
    <original>E</original>
    <variation>K</variation>
    <location>
        <position position="35"/>
    </location>
</feature>
<feature type="sequence variant" id="VAR_027564" description="In dbSNP:rs8999.">
    <original>A</original>
    <variation>S</variation>
    <location>
        <position position="290"/>
    </location>
</feature>
<feature type="sequence variant" id="VAR_027565" description="In dbSNP:rs3739914.">
    <original>V</original>
    <variation>A</variation>
    <location>
        <position position="303"/>
    </location>
</feature>
<feature type="sequence variant" id="VAR_027566" description="In dbSNP:rs3739915.">
    <original>G</original>
    <variation>V</variation>
    <location>
        <position position="360"/>
    </location>
</feature>
<feature type="sequence variant" id="VAR_027567" description="In dbSNP:rs3739916.">
    <original>R</original>
    <variation>Q</variation>
    <location>
        <position position="401"/>
    </location>
</feature>
<feature type="sequence variant" id="VAR_050201" description="In dbSNP:rs12336746.">
    <original>E</original>
    <variation>K</variation>
    <location>
        <position position="473"/>
    </location>
</feature>
<feature type="sequence variant" id="VAR_061363" description="In dbSNP:rs1752676.">
    <original>A</original>
    <variation>V</variation>
    <location>
        <position position="885"/>
    </location>
</feature>
<feature type="sequence conflict" description="In Ref. 3; AAH50734." evidence="7" ref="3">
    <original>K</original>
    <variation>T</variation>
    <location>
        <position position="281"/>
    </location>
</feature>
<feature type="sequence conflict" description="In Ref. 1; CAA58807." evidence="7" ref="1">
    <original>S</original>
    <variation>R</variation>
    <location>
        <position position="649"/>
    </location>
</feature>